<evidence type="ECO:0000255" key="1">
    <source>
        <dbReference type="HAMAP-Rule" id="MF_00688"/>
    </source>
</evidence>
<reference key="1">
    <citation type="journal article" date="2008" name="Genomics">
        <title>Characterization of ST-4821 complex, a unique Neisseria meningitidis clone.</title>
        <authorList>
            <person name="Peng J."/>
            <person name="Yang L."/>
            <person name="Yang F."/>
            <person name="Yang J."/>
            <person name="Yan Y."/>
            <person name="Nie H."/>
            <person name="Zhang X."/>
            <person name="Xiong Z."/>
            <person name="Jiang Y."/>
            <person name="Cheng F."/>
            <person name="Xu X."/>
            <person name="Chen S."/>
            <person name="Sun L."/>
            <person name="Li W."/>
            <person name="Shen Y."/>
            <person name="Shao Z."/>
            <person name="Liang X."/>
            <person name="Xu J."/>
            <person name="Jin Q."/>
        </authorList>
    </citation>
    <scope>NUCLEOTIDE SEQUENCE [LARGE SCALE GENOMIC DNA]</scope>
    <source>
        <strain>053442</strain>
    </source>
</reference>
<organism>
    <name type="scientific">Neisseria meningitidis serogroup C (strain 053442)</name>
    <dbReference type="NCBI Taxonomy" id="374833"/>
    <lineage>
        <taxon>Bacteria</taxon>
        <taxon>Pseudomonadati</taxon>
        <taxon>Pseudomonadota</taxon>
        <taxon>Betaproteobacteria</taxon>
        <taxon>Neisseriales</taxon>
        <taxon>Neisseriaceae</taxon>
        <taxon>Neisseria</taxon>
    </lineage>
</organism>
<comment type="function">
    <text evidence="1">Functions in the N-end rule pathway of protein degradation where it conjugates Leu, Phe and, less efficiently, Met from aminoacyl-tRNAs to the N-termini of proteins containing an N-terminal arginine or lysine.</text>
</comment>
<comment type="catalytic activity">
    <reaction evidence="1">
        <text>N-terminal L-lysyl-[protein] + L-leucyl-tRNA(Leu) = N-terminal L-leucyl-L-lysyl-[protein] + tRNA(Leu) + H(+)</text>
        <dbReference type="Rhea" id="RHEA:12340"/>
        <dbReference type="Rhea" id="RHEA-COMP:9613"/>
        <dbReference type="Rhea" id="RHEA-COMP:9622"/>
        <dbReference type="Rhea" id="RHEA-COMP:12670"/>
        <dbReference type="Rhea" id="RHEA-COMP:12671"/>
        <dbReference type="ChEBI" id="CHEBI:15378"/>
        <dbReference type="ChEBI" id="CHEBI:65249"/>
        <dbReference type="ChEBI" id="CHEBI:78442"/>
        <dbReference type="ChEBI" id="CHEBI:78494"/>
        <dbReference type="ChEBI" id="CHEBI:133043"/>
        <dbReference type="EC" id="2.3.2.6"/>
    </reaction>
</comment>
<comment type="catalytic activity">
    <reaction evidence="1">
        <text>N-terminal L-arginyl-[protein] + L-leucyl-tRNA(Leu) = N-terminal L-leucyl-L-arginyl-[protein] + tRNA(Leu) + H(+)</text>
        <dbReference type="Rhea" id="RHEA:50416"/>
        <dbReference type="Rhea" id="RHEA-COMP:9613"/>
        <dbReference type="Rhea" id="RHEA-COMP:9622"/>
        <dbReference type="Rhea" id="RHEA-COMP:12672"/>
        <dbReference type="Rhea" id="RHEA-COMP:12673"/>
        <dbReference type="ChEBI" id="CHEBI:15378"/>
        <dbReference type="ChEBI" id="CHEBI:64719"/>
        <dbReference type="ChEBI" id="CHEBI:78442"/>
        <dbReference type="ChEBI" id="CHEBI:78494"/>
        <dbReference type="ChEBI" id="CHEBI:133044"/>
        <dbReference type="EC" id="2.3.2.6"/>
    </reaction>
</comment>
<comment type="catalytic activity">
    <reaction evidence="1">
        <text>L-phenylalanyl-tRNA(Phe) + an N-terminal L-alpha-aminoacyl-[protein] = an N-terminal L-phenylalanyl-L-alpha-aminoacyl-[protein] + tRNA(Phe)</text>
        <dbReference type="Rhea" id="RHEA:43632"/>
        <dbReference type="Rhea" id="RHEA-COMP:9668"/>
        <dbReference type="Rhea" id="RHEA-COMP:9699"/>
        <dbReference type="Rhea" id="RHEA-COMP:10636"/>
        <dbReference type="Rhea" id="RHEA-COMP:10637"/>
        <dbReference type="ChEBI" id="CHEBI:78442"/>
        <dbReference type="ChEBI" id="CHEBI:78531"/>
        <dbReference type="ChEBI" id="CHEBI:78597"/>
        <dbReference type="ChEBI" id="CHEBI:83561"/>
        <dbReference type="EC" id="2.3.2.6"/>
    </reaction>
</comment>
<comment type="subcellular location">
    <subcellularLocation>
        <location evidence="1">Cytoplasm</location>
    </subcellularLocation>
</comment>
<comment type="similarity">
    <text evidence="1">Belongs to the L/F-transferase family.</text>
</comment>
<accession>A9M3H4</accession>
<feature type="chain" id="PRO_1000083097" description="Leucyl/phenylalanyl-tRNA--protein transferase">
    <location>
        <begin position="1"/>
        <end position="241"/>
    </location>
</feature>
<proteinExistence type="inferred from homology"/>
<protein>
    <recommendedName>
        <fullName evidence="1">Leucyl/phenylalanyl-tRNA--protein transferase</fullName>
        <ecNumber evidence="1">2.3.2.6</ecNumber>
    </recommendedName>
    <alternativeName>
        <fullName evidence="1">L/F-transferase</fullName>
    </alternativeName>
    <alternativeName>
        <fullName evidence="1">Leucyltransferase</fullName>
    </alternativeName>
    <alternativeName>
        <fullName evidence="1">Phenyalanyltransferase</fullName>
    </alternativeName>
</protein>
<gene>
    <name evidence="1" type="primary">aat</name>
    <name type="ordered locus">NMCC_1942</name>
</gene>
<name>LFTR_NEIM0</name>
<sequence>MRIPLLAPDNYAFPDPAYALAWCDGLVGVSGDLDAGRLLEAYRNGVFPWFSRDGWFFWYAVGPRAVIVPERLHVPRSLAKTLRNGSYRVAVNGCFAEVVAHCAAAARPNQDGTWIAPEFQTAYLKLHEMGHAHSFECHYPDESGETRLAGGFYGVQIGRVFYGESMFALQPDASKIAFACAVPFLADLGVELIDCQQDTEHMRRFGSELLPFADFAERLRMLNAVPLKEEIGRREVVCKGL</sequence>
<keyword id="KW-0012">Acyltransferase</keyword>
<keyword id="KW-0963">Cytoplasm</keyword>
<keyword id="KW-0808">Transferase</keyword>
<dbReference type="EC" id="2.3.2.6" evidence="1"/>
<dbReference type="EMBL" id="CP000381">
    <property type="protein sequence ID" value="ABX74068.1"/>
    <property type="molecule type" value="Genomic_DNA"/>
</dbReference>
<dbReference type="RefSeq" id="WP_002215532.1">
    <property type="nucleotide sequence ID" value="NC_010120.1"/>
</dbReference>
<dbReference type="SMR" id="A9M3H4"/>
<dbReference type="KEGG" id="nmn:NMCC_1942"/>
<dbReference type="HOGENOM" id="CLU_075045_0_0_4"/>
<dbReference type="Proteomes" id="UP000001177">
    <property type="component" value="Chromosome"/>
</dbReference>
<dbReference type="GO" id="GO:0005737">
    <property type="term" value="C:cytoplasm"/>
    <property type="evidence" value="ECO:0007669"/>
    <property type="project" value="UniProtKB-SubCell"/>
</dbReference>
<dbReference type="GO" id="GO:0008914">
    <property type="term" value="F:leucyl-tRNA--protein transferase activity"/>
    <property type="evidence" value="ECO:0007669"/>
    <property type="project" value="UniProtKB-UniRule"/>
</dbReference>
<dbReference type="GO" id="GO:0030163">
    <property type="term" value="P:protein catabolic process"/>
    <property type="evidence" value="ECO:0007669"/>
    <property type="project" value="UniProtKB-UniRule"/>
</dbReference>
<dbReference type="FunFam" id="3.40.630.70:FF:000004">
    <property type="entry name" value="Leucyl/phenylalanyl-tRNA--protein transferase"/>
    <property type="match status" value="1"/>
</dbReference>
<dbReference type="Gene3D" id="3.40.630.70">
    <property type="entry name" value="Leucyl/phenylalanyl-tRNA-protein transferase, C-terminal domain"/>
    <property type="match status" value="1"/>
</dbReference>
<dbReference type="Gene3D" id="3.30.70.3550">
    <property type="entry name" value="Leucyl/phenylalanyl-tRNA-protein transferase, N-terminal domain"/>
    <property type="match status" value="1"/>
</dbReference>
<dbReference type="HAMAP" id="MF_00688">
    <property type="entry name" value="Leu_Phe_trans"/>
    <property type="match status" value="1"/>
</dbReference>
<dbReference type="InterPro" id="IPR016181">
    <property type="entry name" value="Acyl_CoA_acyltransferase"/>
</dbReference>
<dbReference type="InterPro" id="IPR004616">
    <property type="entry name" value="Leu/Phe-tRNA_Trfase"/>
</dbReference>
<dbReference type="InterPro" id="IPR042203">
    <property type="entry name" value="Leu/Phe-tRNA_Trfase_C"/>
</dbReference>
<dbReference type="InterPro" id="IPR042221">
    <property type="entry name" value="Leu/Phe-tRNA_Trfase_N"/>
</dbReference>
<dbReference type="NCBIfam" id="TIGR00667">
    <property type="entry name" value="aat"/>
    <property type="match status" value="1"/>
</dbReference>
<dbReference type="PANTHER" id="PTHR30098">
    <property type="entry name" value="LEUCYL/PHENYLALANYL-TRNA--PROTEIN TRANSFERASE"/>
    <property type="match status" value="1"/>
</dbReference>
<dbReference type="PANTHER" id="PTHR30098:SF2">
    <property type="entry name" value="LEUCYL_PHENYLALANYL-TRNA--PROTEIN TRANSFERASE"/>
    <property type="match status" value="1"/>
</dbReference>
<dbReference type="Pfam" id="PF03588">
    <property type="entry name" value="Leu_Phe_trans"/>
    <property type="match status" value="1"/>
</dbReference>
<dbReference type="SUPFAM" id="SSF55729">
    <property type="entry name" value="Acyl-CoA N-acyltransferases (Nat)"/>
    <property type="match status" value="1"/>
</dbReference>